<sequence length="319" mass="35303">MSLNFLDFEQPIAELEAKIDSLTAVSRQDEKLDINIDEEVHRLREKSVELTRKIFADLGAWQVAQLARHPQRPYTLDYVRLAFDEFDELAGDRAYADDKAIVGGIARLDGRPVMIIGHQKGRETKEKIRRNFGMPAPEGYRKALRLMEMAERFNMPIITFIDTPGAYPGVGAEERGQSEAIARNLREMSRLSVPVICTVIGEGGSGGALAIGVGDKVNMLQYSTYSVISPEGCASILWKSADKAPLAAEAMGIIAPRLKELKLIDSIIQEPLGGAHRNPEAMAASLKAQLLADLADLDVLSKDDLKNRRYQRLMSYGYA</sequence>
<keyword id="KW-0067">ATP-binding</keyword>
<keyword id="KW-0963">Cytoplasm</keyword>
<keyword id="KW-0275">Fatty acid biosynthesis</keyword>
<keyword id="KW-0276">Fatty acid metabolism</keyword>
<keyword id="KW-0444">Lipid biosynthesis</keyword>
<keyword id="KW-0443">Lipid metabolism</keyword>
<keyword id="KW-0547">Nucleotide-binding</keyword>
<keyword id="KW-1185">Reference proteome</keyword>
<keyword id="KW-0808">Transferase</keyword>
<accession>A8ALA3</accession>
<dbReference type="EC" id="2.1.3.15" evidence="1"/>
<dbReference type="EMBL" id="CP000822">
    <property type="protein sequence ID" value="ABV14266.1"/>
    <property type="molecule type" value="Genomic_DNA"/>
</dbReference>
<dbReference type="RefSeq" id="WP_012133972.1">
    <property type="nucleotide sequence ID" value="NC_009792.1"/>
</dbReference>
<dbReference type="SMR" id="A8ALA3"/>
<dbReference type="STRING" id="290338.CKO_03181"/>
<dbReference type="GeneID" id="45136966"/>
<dbReference type="KEGG" id="cko:CKO_03181"/>
<dbReference type="HOGENOM" id="CLU_015486_0_2_6"/>
<dbReference type="OrthoDB" id="9808023at2"/>
<dbReference type="UniPathway" id="UPA00655">
    <property type="reaction ID" value="UER00711"/>
</dbReference>
<dbReference type="Proteomes" id="UP000008148">
    <property type="component" value="Chromosome"/>
</dbReference>
<dbReference type="GO" id="GO:0009317">
    <property type="term" value="C:acetyl-CoA carboxylase complex"/>
    <property type="evidence" value="ECO:0007669"/>
    <property type="project" value="InterPro"/>
</dbReference>
<dbReference type="GO" id="GO:0003989">
    <property type="term" value="F:acetyl-CoA carboxylase activity"/>
    <property type="evidence" value="ECO:0007669"/>
    <property type="project" value="InterPro"/>
</dbReference>
<dbReference type="GO" id="GO:0005524">
    <property type="term" value="F:ATP binding"/>
    <property type="evidence" value="ECO:0007669"/>
    <property type="project" value="UniProtKB-KW"/>
</dbReference>
<dbReference type="GO" id="GO:0016743">
    <property type="term" value="F:carboxyl- or carbamoyltransferase activity"/>
    <property type="evidence" value="ECO:0007669"/>
    <property type="project" value="UniProtKB-UniRule"/>
</dbReference>
<dbReference type="GO" id="GO:0006633">
    <property type="term" value="P:fatty acid biosynthetic process"/>
    <property type="evidence" value="ECO:0007669"/>
    <property type="project" value="UniProtKB-KW"/>
</dbReference>
<dbReference type="GO" id="GO:2001295">
    <property type="term" value="P:malonyl-CoA biosynthetic process"/>
    <property type="evidence" value="ECO:0007669"/>
    <property type="project" value="UniProtKB-UniRule"/>
</dbReference>
<dbReference type="FunFam" id="3.90.226.10:FF:000008">
    <property type="entry name" value="Acetyl-coenzyme A carboxylase carboxyl transferase subunit alpha"/>
    <property type="match status" value="1"/>
</dbReference>
<dbReference type="Gene3D" id="3.90.226.10">
    <property type="entry name" value="2-enoyl-CoA Hydratase, Chain A, domain 1"/>
    <property type="match status" value="1"/>
</dbReference>
<dbReference type="HAMAP" id="MF_00823">
    <property type="entry name" value="AcetylCoA_CT_alpha"/>
    <property type="match status" value="1"/>
</dbReference>
<dbReference type="InterPro" id="IPR001095">
    <property type="entry name" value="Acetyl_CoA_COase_a_su"/>
</dbReference>
<dbReference type="InterPro" id="IPR029045">
    <property type="entry name" value="ClpP/crotonase-like_dom_sf"/>
</dbReference>
<dbReference type="InterPro" id="IPR011763">
    <property type="entry name" value="COA_CT_C"/>
</dbReference>
<dbReference type="NCBIfam" id="TIGR00513">
    <property type="entry name" value="accA"/>
    <property type="match status" value="1"/>
</dbReference>
<dbReference type="NCBIfam" id="NF041504">
    <property type="entry name" value="AccA_sub"/>
    <property type="match status" value="1"/>
</dbReference>
<dbReference type="NCBIfam" id="NF004344">
    <property type="entry name" value="PRK05724.1"/>
    <property type="match status" value="1"/>
</dbReference>
<dbReference type="PANTHER" id="PTHR42853">
    <property type="entry name" value="ACETYL-COENZYME A CARBOXYLASE CARBOXYL TRANSFERASE SUBUNIT ALPHA"/>
    <property type="match status" value="1"/>
</dbReference>
<dbReference type="PANTHER" id="PTHR42853:SF3">
    <property type="entry name" value="ACETYL-COENZYME A CARBOXYLASE CARBOXYL TRANSFERASE SUBUNIT ALPHA, CHLOROPLASTIC"/>
    <property type="match status" value="1"/>
</dbReference>
<dbReference type="Pfam" id="PF03255">
    <property type="entry name" value="ACCA"/>
    <property type="match status" value="1"/>
</dbReference>
<dbReference type="PRINTS" id="PR01069">
    <property type="entry name" value="ACCCTRFRASEA"/>
</dbReference>
<dbReference type="SUPFAM" id="SSF52096">
    <property type="entry name" value="ClpP/crotonase"/>
    <property type="match status" value="1"/>
</dbReference>
<dbReference type="PROSITE" id="PS50989">
    <property type="entry name" value="COA_CT_CTER"/>
    <property type="match status" value="1"/>
</dbReference>
<reference key="1">
    <citation type="submission" date="2007-08" db="EMBL/GenBank/DDBJ databases">
        <authorList>
            <consortium name="The Citrobacter koseri Genome Sequencing Project"/>
            <person name="McClelland M."/>
            <person name="Sanderson E.K."/>
            <person name="Porwollik S."/>
            <person name="Spieth J."/>
            <person name="Clifton W.S."/>
            <person name="Latreille P."/>
            <person name="Courtney L."/>
            <person name="Wang C."/>
            <person name="Pepin K."/>
            <person name="Bhonagiri V."/>
            <person name="Nash W."/>
            <person name="Johnson M."/>
            <person name="Thiruvilangam P."/>
            <person name="Wilson R."/>
        </authorList>
    </citation>
    <scope>NUCLEOTIDE SEQUENCE [LARGE SCALE GENOMIC DNA]</scope>
    <source>
        <strain>ATCC BAA-895 / CDC 4225-83 / SGSC4696</strain>
    </source>
</reference>
<organism>
    <name type="scientific">Citrobacter koseri (strain ATCC BAA-895 / CDC 4225-83 / SGSC4696)</name>
    <dbReference type="NCBI Taxonomy" id="290338"/>
    <lineage>
        <taxon>Bacteria</taxon>
        <taxon>Pseudomonadati</taxon>
        <taxon>Pseudomonadota</taxon>
        <taxon>Gammaproteobacteria</taxon>
        <taxon>Enterobacterales</taxon>
        <taxon>Enterobacteriaceae</taxon>
        <taxon>Citrobacter</taxon>
    </lineage>
</organism>
<comment type="function">
    <text evidence="1">Component of the acetyl coenzyme A carboxylase (ACC) complex. First, biotin carboxylase catalyzes the carboxylation of biotin on its carrier protein (BCCP) and then the CO(2) group is transferred by the carboxyltransferase to acetyl-CoA to form malonyl-CoA.</text>
</comment>
<comment type="catalytic activity">
    <reaction evidence="1">
        <text>N(6)-carboxybiotinyl-L-lysyl-[protein] + acetyl-CoA = N(6)-biotinyl-L-lysyl-[protein] + malonyl-CoA</text>
        <dbReference type="Rhea" id="RHEA:54728"/>
        <dbReference type="Rhea" id="RHEA-COMP:10505"/>
        <dbReference type="Rhea" id="RHEA-COMP:10506"/>
        <dbReference type="ChEBI" id="CHEBI:57288"/>
        <dbReference type="ChEBI" id="CHEBI:57384"/>
        <dbReference type="ChEBI" id="CHEBI:83144"/>
        <dbReference type="ChEBI" id="CHEBI:83145"/>
        <dbReference type="EC" id="2.1.3.15"/>
    </reaction>
</comment>
<comment type="pathway">
    <text evidence="1">Lipid metabolism; malonyl-CoA biosynthesis; malonyl-CoA from acetyl-CoA: step 1/1.</text>
</comment>
<comment type="subunit">
    <text evidence="1">Acetyl-CoA carboxylase is a heterohexamer composed of biotin carboxyl carrier protein (AccB), biotin carboxylase (AccC) and two subunits each of ACCase subunit alpha (AccA) and ACCase subunit beta (AccD).</text>
</comment>
<comment type="subcellular location">
    <subcellularLocation>
        <location evidence="1">Cytoplasm</location>
    </subcellularLocation>
</comment>
<comment type="similarity">
    <text evidence="1">Belongs to the AccA family.</text>
</comment>
<proteinExistence type="inferred from homology"/>
<gene>
    <name evidence="1" type="primary">accA</name>
    <name type="ordered locus">CKO_03181</name>
</gene>
<feature type="chain" id="PRO_1000062607" description="Acetyl-coenzyme A carboxylase carboxyl transferase subunit alpha">
    <location>
        <begin position="1"/>
        <end position="319"/>
    </location>
</feature>
<feature type="domain" description="CoA carboxyltransferase C-terminal" evidence="2">
    <location>
        <begin position="35"/>
        <end position="296"/>
    </location>
</feature>
<name>ACCA_CITK8</name>
<evidence type="ECO:0000255" key="1">
    <source>
        <dbReference type="HAMAP-Rule" id="MF_00823"/>
    </source>
</evidence>
<evidence type="ECO:0000255" key="2">
    <source>
        <dbReference type="PROSITE-ProRule" id="PRU01137"/>
    </source>
</evidence>
<protein>
    <recommendedName>
        <fullName evidence="1">Acetyl-coenzyme A carboxylase carboxyl transferase subunit alpha</fullName>
        <shortName evidence="1">ACCase subunit alpha</shortName>
        <shortName evidence="1">Acetyl-CoA carboxylase carboxyltransferase subunit alpha</shortName>
        <ecNumber evidence="1">2.1.3.15</ecNumber>
    </recommendedName>
</protein>